<comment type="function">
    <text evidence="1">Catalyzes the attachment of glutamate to tRNA(Glu) in a two-step reaction: glutamate is first activated by ATP to form Glu-AMP and then transferred to the acceptor end of tRNA(Glu).</text>
</comment>
<comment type="catalytic activity">
    <reaction evidence="1">
        <text>tRNA(Glu) + L-glutamate + ATP = L-glutamyl-tRNA(Glu) + AMP + diphosphate</text>
        <dbReference type="Rhea" id="RHEA:23540"/>
        <dbReference type="Rhea" id="RHEA-COMP:9663"/>
        <dbReference type="Rhea" id="RHEA-COMP:9680"/>
        <dbReference type="ChEBI" id="CHEBI:29985"/>
        <dbReference type="ChEBI" id="CHEBI:30616"/>
        <dbReference type="ChEBI" id="CHEBI:33019"/>
        <dbReference type="ChEBI" id="CHEBI:78442"/>
        <dbReference type="ChEBI" id="CHEBI:78520"/>
        <dbReference type="ChEBI" id="CHEBI:456215"/>
        <dbReference type="EC" id="6.1.1.17"/>
    </reaction>
</comment>
<comment type="subunit">
    <text evidence="1">Monomer.</text>
</comment>
<comment type="subcellular location">
    <subcellularLocation>
        <location evidence="1">Cytoplasm</location>
    </subcellularLocation>
</comment>
<comment type="similarity">
    <text evidence="1">Belongs to the class-I aminoacyl-tRNA synthetase family. Glutamate--tRNA ligase type 1 subfamily.</text>
</comment>
<protein>
    <recommendedName>
        <fullName evidence="1">Glutamate--tRNA ligase</fullName>
        <ecNumber evidence="1">6.1.1.17</ecNumber>
    </recommendedName>
    <alternativeName>
        <fullName evidence="1">Glutamyl-tRNA synthetase</fullName>
        <shortName evidence="1">GluRS</shortName>
    </alternativeName>
</protein>
<sequence>MSERIRVRYAPSPTGYLHIGNARTALFNYLFAKHYNGDFVVRIEDTDSKRNLEDGESSQFDNLKWLGLDWDESVDKDKGFGPYRQSERAEIYNPLIQQLLEEDKAYKCYMTEEELEAEREAQIARGEMPRYGGQHAHLTEEQRQQYEAEGRKPSIRFRVPKDQTYTFNDMVKGEISFESDNIGDWVIVKKDGVPTYNFAVAVDDHYMQISDVIRGDDHVSNTPKQLMIYEAFGWEAPRFGHMSLIVNEERKKLSKRDGQILQFIEQYRDLGYLPEALFNFITLLGWSPEGEEEIFSKEEFIKIFDEKRLSKSPAMFDRQKLAWVNNQYMKTKDTETVFELALPHLIKANLIPENPSEKDREWGRKLIALYQKEMSYAGEIVPLSEMFFHEMPELGKDEQEVLQGEQVPELMNHLYGKLESLESFEATEIKKMIKEVQKETGIKGKQLFMPIRVAVTGQMHGPELPNTIEVLGKDKVLSRLKNLV</sequence>
<proteinExistence type="inferred from homology"/>
<gene>
    <name evidence="1" type="primary">gltX</name>
    <name type="ordered locus">SE_0290</name>
</gene>
<reference key="1">
    <citation type="journal article" date="2003" name="Mol. Microbiol.">
        <title>Genome-based analysis of virulence genes in a non-biofilm-forming Staphylococcus epidermidis strain (ATCC 12228).</title>
        <authorList>
            <person name="Zhang Y.-Q."/>
            <person name="Ren S.-X."/>
            <person name="Li H.-L."/>
            <person name="Wang Y.-X."/>
            <person name="Fu G."/>
            <person name="Yang J."/>
            <person name="Qin Z.-Q."/>
            <person name="Miao Y.-G."/>
            <person name="Wang W.-Y."/>
            <person name="Chen R.-S."/>
            <person name="Shen Y."/>
            <person name="Chen Z."/>
            <person name="Yuan Z.-H."/>
            <person name="Zhao G.-P."/>
            <person name="Qu D."/>
            <person name="Danchin A."/>
            <person name="Wen Y.-M."/>
        </authorList>
    </citation>
    <scope>NUCLEOTIDE SEQUENCE [LARGE SCALE GENOMIC DNA]</scope>
    <source>
        <strain>ATCC 12228 / FDA PCI 1200</strain>
    </source>
</reference>
<organism>
    <name type="scientific">Staphylococcus epidermidis (strain ATCC 12228 / FDA PCI 1200)</name>
    <dbReference type="NCBI Taxonomy" id="176280"/>
    <lineage>
        <taxon>Bacteria</taxon>
        <taxon>Bacillati</taxon>
        <taxon>Bacillota</taxon>
        <taxon>Bacilli</taxon>
        <taxon>Bacillales</taxon>
        <taxon>Staphylococcaceae</taxon>
        <taxon>Staphylococcus</taxon>
    </lineage>
</organism>
<evidence type="ECO:0000255" key="1">
    <source>
        <dbReference type="HAMAP-Rule" id="MF_00022"/>
    </source>
</evidence>
<dbReference type="EC" id="6.1.1.17" evidence="1"/>
<dbReference type="EMBL" id="AE015929">
    <property type="protein sequence ID" value="AAO03887.1"/>
    <property type="molecule type" value="Genomic_DNA"/>
</dbReference>
<dbReference type="RefSeq" id="NP_763845.1">
    <property type="nucleotide sequence ID" value="NC_004461.1"/>
</dbReference>
<dbReference type="RefSeq" id="WP_002438667.1">
    <property type="nucleotide sequence ID" value="NZ_WBME01000014.1"/>
</dbReference>
<dbReference type="SMR" id="Q8CTU3"/>
<dbReference type="KEGG" id="sep:SE_0290"/>
<dbReference type="PATRIC" id="fig|176280.10.peg.266"/>
<dbReference type="eggNOG" id="COG0008">
    <property type="taxonomic scope" value="Bacteria"/>
</dbReference>
<dbReference type="HOGENOM" id="CLU_015768_6_1_9"/>
<dbReference type="OrthoDB" id="9807503at2"/>
<dbReference type="Proteomes" id="UP000001411">
    <property type="component" value="Chromosome"/>
</dbReference>
<dbReference type="GO" id="GO:0005829">
    <property type="term" value="C:cytosol"/>
    <property type="evidence" value="ECO:0007669"/>
    <property type="project" value="TreeGrafter"/>
</dbReference>
<dbReference type="GO" id="GO:0005524">
    <property type="term" value="F:ATP binding"/>
    <property type="evidence" value="ECO:0007669"/>
    <property type="project" value="UniProtKB-UniRule"/>
</dbReference>
<dbReference type="GO" id="GO:0004818">
    <property type="term" value="F:glutamate-tRNA ligase activity"/>
    <property type="evidence" value="ECO:0007669"/>
    <property type="project" value="UniProtKB-UniRule"/>
</dbReference>
<dbReference type="GO" id="GO:0000049">
    <property type="term" value="F:tRNA binding"/>
    <property type="evidence" value="ECO:0007669"/>
    <property type="project" value="InterPro"/>
</dbReference>
<dbReference type="GO" id="GO:0008270">
    <property type="term" value="F:zinc ion binding"/>
    <property type="evidence" value="ECO:0007669"/>
    <property type="project" value="InterPro"/>
</dbReference>
<dbReference type="GO" id="GO:0006424">
    <property type="term" value="P:glutamyl-tRNA aminoacylation"/>
    <property type="evidence" value="ECO:0007669"/>
    <property type="project" value="UniProtKB-UniRule"/>
</dbReference>
<dbReference type="CDD" id="cd00808">
    <property type="entry name" value="GluRS_core"/>
    <property type="match status" value="1"/>
</dbReference>
<dbReference type="FunFam" id="1.10.10.350:FF:000002">
    <property type="entry name" value="Glutamate--tRNA ligase"/>
    <property type="match status" value="1"/>
</dbReference>
<dbReference type="FunFam" id="3.40.50.620:FF:000007">
    <property type="entry name" value="Glutamate--tRNA ligase"/>
    <property type="match status" value="1"/>
</dbReference>
<dbReference type="Gene3D" id="1.10.10.350">
    <property type="match status" value="1"/>
</dbReference>
<dbReference type="Gene3D" id="3.40.50.620">
    <property type="entry name" value="HUPs"/>
    <property type="match status" value="1"/>
</dbReference>
<dbReference type="HAMAP" id="MF_00022">
    <property type="entry name" value="Glu_tRNA_synth_type1"/>
    <property type="match status" value="1"/>
</dbReference>
<dbReference type="InterPro" id="IPR045462">
    <property type="entry name" value="aa-tRNA-synth_I_cd-bd"/>
</dbReference>
<dbReference type="InterPro" id="IPR020751">
    <property type="entry name" value="aa-tRNA-synth_I_codon-bd_sub2"/>
</dbReference>
<dbReference type="InterPro" id="IPR001412">
    <property type="entry name" value="aa-tRNA-synth_I_CS"/>
</dbReference>
<dbReference type="InterPro" id="IPR008925">
    <property type="entry name" value="aa_tRNA-synth_I_cd-bd_sf"/>
</dbReference>
<dbReference type="InterPro" id="IPR004527">
    <property type="entry name" value="Glu-tRNA-ligase_bac/mito"/>
</dbReference>
<dbReference type="InterPro" id="IPR000924">
    <property type="entry name" value="Glu/Gln-tRNA-synth"/>
</dbReference>
<dbReference type="InterPro" id="IPR020058">
    <property type="entry name" value="Glu/Gln-tRNA-synth_Ib_cat-dom"/>
</dbReference>
<dbReference type="InterPro" id="IPR049940">
    <property type="entry name" value="GluQ/Sye"/>
</dbReference>
<dbReference type="InterPro" id="IPR033910">
    <property type="entry name" value="GluRS_core"/>
</dbReference>
<dbReference type="InterPro" id="IPR014729">
    <property type="entry name" value="Rossmann-like_a/b/a_fold"/>
</dbReference>
<dbReference type="NCBIfam" id="TIGR00464">
    <property type="entry name" value="gltX_bact"/>
    <property type="match status" value="1"/>
</dbReference>
<dbReference type="PANTHER" id="PTHR43311">
    <property type="entry name" value="GLUTAMATE--TRNA LIGASE"/>
    <property type="match status" value="1"/>
</dbReference>
<dbReference type="PANTHER" id="PTHR43311:SF2">
    <property type="entry name" value="GLUTAMATE--TRNA LIGASE, MITOCHONDRIAL-RELATED"/>
    <property type="match status" value="1"/>
</dbReference>
<dbReference type="Pfam" id="PF19269">
    <property type="entry name" value="Anticodon_2"/>
    <property type="match status" value="1"/>
</dbReference>
<dbReference type="Pfam" id="PF00749">
    <property type="entry name" value="tRNA-synt_1c"/>
    <property type="match status" value="1"/>
</dbReference>
<dbReference type="PRINTS" id="PR00987">
    <property type="entry name" value="TRNASYNTHGLU"/>
</dbReference>
<dbReference type="SUPFAM" id="SSF48163">
    <property type="entry name" value="An anticodon-binding domain of class I aminoacyl-tRNA synthetases"/>
    <property type="match status" value="1"/>
</dbReference>
<dbReference type="SUPFAM" id="SSF52374">
    <property type="entry name" value="Nucleotidylyl transferase"/>
    <property type="match status" value="1"/>
</dbReference>
<dbReference type="PROSITE" id="PS00178">
    <property type="entry name" value="AA_TRNA_LIGASE_I"/>
    <property type="match status" value="1"/>
</dbReference>
<name>SYE_STAES</name>
<feature type="chain" id="PRO_0000119657" description="Glutamate--tRNA ligase">
    <location>
        <begin position="1"/>
        <end position="484"/>
    </location>
</feature>
<feature type="short sequence motif" description="'HIGH' region" evidence="1">
    <location>
        <begin position="11"/>
        <end position="21"/>
    </location>
</feature>
<feature type="short sequence motif" description="'KMSKS' region" evidence="1">
    <location>
        <begin position="252"/>
        <end position="256"/>
    </location>
</feature>
<feature type="binding site" evidence="1">
    <location>
        <position position="255"/>
    </location>
    <ligand>
        <name>ATP</name>
        <dbReference type="ChEBI" id="CHEBI:30616"/>
    </ligand>
</feature>
<accession>Q8CTU3</accession>
<keyword id="KW-0030">Aminoacyl-tRNA synthetase</keyword>
<keyword id="KW-0067">ATP-binding</keyword>
<keyword id="KW-0963">Cytoplasm</keyword>
<keyword id="KW-0436">Ligase</keyword>
<keyword id="KW-0547">Nucleotide-binding</keyword>
<keyword id="KW-0648">Protein biosynthesis</keyword>